<feature type="chain" id="PRO_0000130832" description="Small ribosomal subunit protein eS4y">
    <location>
        <begin position="1"/>
        <end position="262"/>
    </location>
</feature>
<feature type="domain" description="S4 RNA-binding">
    <location>
        <begin position="42"/>
        <end position="104"/>
    </location>
</feature>
<feature type="sequence conflict" description="In Ref. 7; CAA83563." evidence="3" ref="7">
    <original>A</original>
    <variation>G</variation>
    <location>
        <position position="28"/>
    </location>
</feature>
<feature type="sequence conflict" description="In Ref. 7; CAA83563." evidence="3" ref="7">
    <original>P</original>
    <variation>S</variation>
    <location>
        <position position="31"/>
    </location>
</feature>
<feature type="sequence conflict" description="In Ref. 7; CAA83563." evidence="3" ref="7">
    <original>K</original>
    <variation>M</variation>
    <location>
        <position position="53"/>
    </location>
</feature>
<feature type="sequence conflict" description="In Ref. 7; CAA83563." evidence="3" ref="7">
    <original>A</original>
    <variation>S</variation>
    <location>
        <position position="55"/>
    </location>
</feature>
<feature type="sequence conflict" description="In Ref. 6; CAA79086." evidence="3" ref="6">
    <original>I</original>
    <variation>IV</variation>
    <location>
        <position position="92"/>
    </location>
</feature>
<feature type="sequence conflict" description="In Ref. 7; CAA23384." evidence="3" ref="7">
    <original>AS</original>
    <variation>SA</variation>
    <location>
        <begin position="257"/>
        <end position="258"/>
    </location>
</feature>
<name>RS42_ARATH</name>
<organism>
    <name type="scientific">Arabidopsis thaliana</name>
    <name type="common">Mouse-ear cress</name>
    <dbReference type="NCBI Taxonomy" id="3702"/>
    <lineage>
        <taxon>Eukaryota</taxon>
        <taxon>Viridiplantae</taxon>
        <taxon>Streptophyta</taxon>
        <taxon>Embryophyta</taxon>
        <taxon>Tracheophyta</taxon>
        <taxon>Spermatophyta</taxon>
        <taxon>Magnoliopsida</taxon>
        <taxon>eudicotyledons</taxon>
        <taxon>Gunneridae</taxon>
        <taxon>Pentapetalae</taxon>
        <taxon>rosids</taxon>
        <taxon>malvids</taxon>
        <taxon>Brassicales</taxon>
        <taxon>Brassicaceae</taxon>
        <taxon>Camelineae</taxon>
        <taxon>Arabidopsis</taxon>
    </lineage>
</organism>
<evidence type="ECO:0000250" key="1"/>
<evidence type="ECO:0000303" key="2">
    <source>
    </source>
</evidence>
<evidence type="ECO:0000305" key="3"/>
<reference key="1">
    <citation type="journal article" date="1998" name="DNA Res.">
        <title>Structural analysis of Arabidopsis thaliana chromosome 5. V. Sequence features of the regions of 1,381,565 bp covered by twenty one physically assigned P1 and TAC clones.</title>
        <authorList>
            <person name="Kaneko T."/>
            <person name="Kotani H."/>
            <person name="Nakamura Y."/>
            <person name="Sato S."/>
            <person name="Asamizu E."/>
            <person name="Miyajima N."/>
            <person name="Tabata S."/>
        </authorList>
    </citation>
    <scope>NUCLEOTIDE SEQUENCE [LARGE SCALE GENOMIC DNA]</scope>
    <source>
        <strain>cv. Columbia</strain>
    </source>
</reference>
<reference key="2">
    <citation type="journal article" date="2000" name="Nature">
        <title>Sequence and analysis of chromosome 5 of the plant Arabidopsis thaliana.</title>
        <authorList>
            <person name="Tabata S."/>
            <person name="Kaneko T."/>
            <person name="Nakamura Y."/>
            <person name="Kotani H."/>
            <person name="Kato T."/>
            <person name="Asamizu E."/>
            <person name="Miyajima N."/>
            <person name="Sasamoto S."/>
            <person name="Kimura T."/>
            <person name="Hosouchi T."/>
            <person name="Kawashima K."/>
            <person name="Kohara M."/>
            <person name="Matsumoto M."/>
            <person name="Matsuno A."/>
            <person name="Muraki A."/>
            <person name="Nakayama S."/>
            <person name="Nakazaki N."/>
            <person name="Naruo K."/>
            <person name="Okumura S."/>
            <person name="Shinpo S."/>
            <person name="Takeuchi C."/>
            <person name="Wada T."/>
            <person name="Watanabe A."/>
            <person name="Yamada M."/>
            <person name="Yasuda M."/>
            <person name="Sato S."/>
            <person name="de la Bastide M."/>
            <person name="Huang E."/>
            <person name="Spiegel L."/>
            <person name="Gnoj L."/>
            <person name="O'Shaughnessy A."/>
            <person name="Preston R."/>
            <person name="Habermann K."/>
            <person name="Murray J."/>
            <person name="Johnson D."/>
            <person name="Rohlfing T."/>
            <person name="Nelson J."/>
            <person name="Stoneking T."/>
            <person name="Pepin K."/>
            <person name="Spieth J."/>
            <person name="Sekhon M."/>
            <person name="Armstrong J."/>
            <person name="Becker M."/>
            <person name="Belter E."/>
            <person name="Cordum H."/>
            <person name="Cordes M."/>
            <person name="Courtney L."/>
            <person name="Courtney W."/>
            <person name="Dante M."/>
            <person name="Du H."/>
            <person name="Edwards J."/>
            <person name="Fryman J."/>
            <person name="Haakensen B."/>
            <person name="Lamar E."/>
            <person name="Latreille P."/>
            <person name="Leonard S."/>
            <person name="Meyer R."/>
            <person name="Mulvaney E."/>
            <person name="Ozersky P."/>
            <person name="Riley A."/>
            <person name="Strowmatt C."/>
            <person name="Wagner-McPherson C."/>
            <person name="Wollam A."/>
            <person name="Yoakum M."/>
            <person name="Bell M."/>
            <person name="Dedhia N."/>
            <person name="Parnell L."/>
            <person name="Shah R."/>
            <person name="Rodriguez M."/>
            <person name="Hoon See L."/>
            <person name="Vil D."/>
            <person name="Baker J."/>
            <person name="Kirchoff K."/>
            <person name="Toth K."/>
            <person name="King L."/>
            <person name="Bahret A."/>
            <person name="Miller B."/>
            <person name="Marra M.A."/>
            <person name="Martienssen R."/>
            <person name="McCombie W.R."/>
            <person name="Wilson R.K."/>
            <person name="Murphy G."/>
            <person name="Bancroft I."/>
            <person name="Volckaert G."/>
            <person name="Wambutt R."/>
            <person name="Duesterhoeft A."/>
            <person name="Stiekema W."/>
            <person name="Pohl T."/>
            <person name="Entian K.-D."/>
            <person name="Terryn N."/>
            <person name="Hartley N."/>
            <person name="Bent E."/>
            <person name="Johnson S."/>
            <person name="Langham S.-A."/>
            <person name="McCullagh B."/>
            <person name="Robben J."/>
            <person name="Grymonprez B."/>
            <person name="Zimmermann W."/>
            <person name="Ramsperger U."/>
            <person name="Wedler H."/>
            <person name="Balke K."/>
            <person name="Wedler E."/>
            <person name="Peters S."/>
            <person name="van Staveren M."/>
            <person name="Dirkse W."/>
            <person name="Mooijman P."/>
            <person name="Klein Lankhorst R."/>
            <person name="Weitzenegger T."/>
            <person name="Bothe G."/>
            <person name="Rose M."/>
            <person name="Hauf J."/>
            <person name="Berneiser S."/>
            <person name="Hempel S."/>
            <person name="Feldpausch M."/>
            <person name="Lamberth S."/>
            <person name="Villarroel R."/>
            <person name="Gielen J."/>
            <person name="Ardiles W."/>
            <person name="Bents O."/>
            <person name="Lemcke K."/>
            <person name="Kolesov G."/>
            <person name="Mayer K.F.X."/>
            <person name="Rudd S."/>
            <person name="Schoof H."/>
            <person name="Schueller C."/>
            <person name="Zaccaria P."/>
            <person name="Mewes H.-W."/>
            <person name="Bevan M."/>
            <person name="Fransz P.F."/>
        </authorList>
    </citation>
    <scope>NUCLEOTIDE SEQUENCE [LARGE SCALE GENOMIC DNA]</scope>
    <source>
        <strain>cv. Columbia</strain>
    </source>
</reference>
<reference key="3">
    <citation type="journal article" date="2017" name="Plant J.">
        <title>Araport11: a complete reannotation of the Arabidopsis thaliana reference genome.</title>
        <authorList>
            <person name="Cheng C.Y."/>
            <person name="Krishnakumar V."/>
            <person name="Chan A.P."/>
            <person name="Thibaud-Nissen F."/>
            <person name="Schobel S."/>
            <person name="Town C.D."/>
        </authorList>
    </citation>
    <scope>GENOME REANNOTATION</scope>
    <source>
        <strain>cv. Columbia</strain>
    </source>
</reference>
<reference key="4">
    <citation type="journal article" date="2003" name="Science">
        <title>Empirical analysis of transcriptional activity in the Arabidopsis genome.</title>
        <authorList>
            <person name="Yamada K."/>
            <person name="Lim J."/>
            <person name="Dale J.M."/>
            <person name="Chen H."/>
            <person name="Shinn P."/>
            <person name="Palm C.J."/>
            <person name="Southwick A.M."/>
            <person name="Wu H.C."/>
            <person name="Kim C.J."/>
            <person name="Nguyen M."/>
            <person name="Pham P.K."/>
            <person name="Cheuk R.F."/>
            <person name="Karlin-Newmann G."/>
            <person name="Liu S.X."/>
            <person name="Lam B."/>
            <person name="Sakano H."/>
            <person name="Wu T."/>
            <person name="Yu G."/>
            <person name="Miranda M."/>
            <person name="Quach H.L."/>
            <person name="Tripp M."/>
            <person name="Chang C.H."/>
            <person name="Lee J.M."/>
            <person name="Toriumi M.J."/>
            <person name="Chan M.M."/>
            <person name="Tang C.C."/>
            <person name="Onodera C.S."/>
            <person name="Deng J.M."/>
            <person name="Akiyama K."/>
            <person name="Ansari Y."/>
            <person name="Arakawa T."/>
            <person name="Banh J."/>
            <person name="Banno F."/>
            <person name="Bowser L."/>
            <person name="Brooks S.Y."/>
            <person name="Carninci P."/>
            <person name="Chao Q."/>
            <person name="Choy N."/>
            <person name="Enju A."/>
            <person name="Goldsmith A.D."/>
            <person name="Gurjal M."/>
            <person name="Hansen N.F."/>
            <person name="Hayashizaki Y."/>
            <person name="Johnson-Hopson C."/>
            <person name="Hsuan V.W."/>
            <person name="Iida K."/>
            <person name="Karnes M."/>
            <person name="Khan S."/>
            <person name="Koesema E."/>
            <person name="Ishida J."/>
            <person name="Jiang P.X."/>
            <person name="Jones T."/>
            <person name="Kawai J."/>
            <person name="Kamiya A."/>
            <person name="Meyers C."/>
            <person name="Nakajima M."/>
            <person name="Narusaka M."/>
            <person name="Seki M."/>
            <person name="Sakurai T."/>
            <person name="Satou M."/>
            <person name="Tamse R."/>
            <person name="Vaysberg M."/>
            <person name="Wallender E.K."/>
            <person name="Wong C."/>
            <person name="Yamamura Y."/>
            <person name="Yuan S."/>
            <person name="Shinozaki K."/>
            <person name="Davis R.W."/>
            <person name="Theologis A."/>
            <person name="Ecker J.R."/>
        </authorList>
    </citation>
    <scope>NUCLEOTIDE SEQUENCE [LARGE SCALE MRNA]</scope>
    <source>
        <strain>cv. Columbia</strain>
    </source>
</reference>
<reference key="5">
    <citation type="submission" date="2002-03" db="EMBL/GenBank/DDBJ databases">
        <title>Full-length cDNA from Arabidopsis thaliana.</title>
        <authorList>
            <person name="Brover V.V."/>
            <person name="Troukhan M.E."/>
            <person name="Alexandrov N.A."/>
            <person name="Lu Y.-P."/>
            <person name="Flavell R.B."/>
            <person name="Feldmann K.A."/>
        </authorList>
    </citation>
    <scope>NUCLEOTIDE SEQUENCE [LARGE SCALE MRNA]</scope>
</reference>
<reference key="6">
    <citation type="journal article" date="1993" name="Plant J.">
        <title>An inventory of 1152 expressed sequence tags obtained by partial sequencing of cDNAs from Arabidopsis thaliana.</title>
        <authorList>
            <person name="Hoefte H."/>
            <person name="Desprez T."/>
            <person name="Amselem J."/>
            <person name="Chiapello H."/>
            <person name="Rouze P."/>
            <person name="Caboche M."/>
            <person name="Moisan A."/>
            <person name="Jourjon M.-F."/>
            <person name="Charpenteau J.-L."/>
            <person name="Berthomieu P."/>
            <person name="Guerrier D."/>
            <person name="Giraudat J."/>
            <person name="Quigley F."/>
            <person name="Thomas F."/>
            <person name="Yu D.-Y."/>
            <person name="Mache R."/>
            <person name="Raynal M."/>
            <person name="Cooke R."/>
            <person name="Grellet F."/>
            <person name="Delseny M."/>
            <person name="Parmentier Y."/>
            <person name="de Marcillac G."/>
            <person name="Gigot C."/>
            <person name="Fleck J."/>
            <person name="Philipps G."/>
            <person name="Axelos M."/>
            <person name="Bardet C."/>
            <person name="Tremousaygue D."/>
            <person name="Lescure B."/>
        </authorList>
    </citation>
    <scope>NUCLEOTIDE SEQUENCE [LARGE SCALE MRNA] OF 1-122 AND 236-262</scope>
    <source>
        <strain>cv. Columbia</strain>
    </source>
</reference>
<reference key="7">
    <citation type="journal article" date="1996" name="Plant J.">
        <title>Further progress towards a catalogue of all Arabidopsis genes: analysis of a set of 5000 non-redundant ESTs.</title>
        <authorList>
            <person name="Cooke R."/>
            <person name="Raynal M."/>
            <person name="Laudie M."/>
            <person name="Grellet F."/>
            <person name="Delseny M."/>
            <person name="Morris P.-C."/>
            <person name="Guerrier D."/>
            <person name="Giraudat J."/>
            <person name="Quigley F."/>
            <person name="Clabault G."/>
            <person name="Li Y.-F."/>
            <person name="Mache R."/>
            <person name="Krivitzky M."/>
            <person name="Gy I.J.-J."/>
            <person name="Kreis M."/>
            <person name="Lecharny A."/>
            <person name="Parmentier Y."/>
            <person name="Marbach J."/>
            <person name="Fleck J."/>
            <person name="Clement B."/>
            <person name="Philipps G."/>
            <person name="Herve C."/>
            <person name="Bardet C."/>
            <person name="Tremousaygue D."/>
            <person name="Lescure B."/>
            <person name="Lacomme C."/>
            <person name="Roby D."/>
            <person name="Jourjon M.-F."/>
            <person name="Chabrier P."/>
            <person name="Charpenteau J.-L."/>
            <person name="Desprez T."/>
            <person name="Amselem J."/>
            <person name="Chiapello H."/>
            <person name="Hoefte H."/>
        </authorList>
    </citation>
    <scope>NUCLEOTIDE SEQUENCE [LARGE SCALE MRNA] OF 1-72 AND 133-262</scope>
    <source>
        <strain>cv. Columbia</strain>
        <tissue>Green siliques</tissue>
    </source>
</reference>
<reference key="8">
    <citation type="journal article" date="2001" name="Plant Physiol.">
        <title>The organization of cytoplasmic ribosomal protein genes in the Arabidopsis genome.</title>
        <authorList>
            <person name="Barakat A."/>
            <person name="Szick-Miranda K."/>
            <person name="Chang I.-F."/>
            <person name="Guyot R."/>
            <person name="Blanc G."/>
            <person name="Cooke R."/>
            <person name="Delseny M."/>
            <person name="Bailey-Serres J."/>
        </authorList>
    </citation>
    <scope>GENE FAMILY ORGANIZATION</scope>
    <scope>NOMENCLATURE</scope>
</reference>
<reference key="9">
    <citation type="journal article" date="2023" name="Plant Cell">
        <title>An updated nomenclature for plant ribosomal protein genes.</title>
        <authorList>
            <person name="Scarpin M.R."/>
            <person name="Busche M."/>
            <person name="Martinez R.E."/>
            <person name="Harper L.C."/>
            <person name="Reiser L."/>
            <person name="Szakonyi D."/>
            <person name="Merchante C."/>
            <person name="Lan T."/>
            <person name="Xiong W."/>
            <person name="Mo B."/>
            <person name="Tang G."/>
            <person name="Chen X."/>
            <person name="Bailey-Serres J."/>
            <person name="Browning K.S."/>
            <person name="Brunkard J.O."/>
        </authorList>
    </citation>
    <scope>NOMENCLATURE</scope>
</reference>
<comment type="subcellular location">
    <subcellularLocation>
        <location evidence="1">Cytoplasm</location>
    </subcellularLocation>
</comment>
<comment type="alternative products">
    <event type="alternative splicing"/>
    <isoform>
        <id>P49204-1</id>
        <name>1</name>
        <sequence type="displayed"/>
    </isoform>
    <text>A number of isoforms are produced. According to EST sequences.</text>
</comment>
<comment type="similarity">
    <text evidence="3">Belongs to the eukaryotic ribosomal protein eS4 family.</text>
</comment>
<comment type="sequence caution" evidence="3">
    <conflict type="erroneous gene model prediction">
        <sequence resource="EMBL-CDS" id="BAB11167"/>
    </conflict>
</comment>
<comment type="sequence caution" evidence="3">
    <conflict type="erroneous initiation">
        <sequence resource="EMBL-CDS" id="CAA79086"/>
    </conflict>
</comment>
<keyword id="KW-0025">Alternative splicing</keyword>
<keyword id="KW-0963">Cytoplasm</keyword>
<keyword id="KW-1185">Reference proteome</keyword>
<keyword id="KW-0687">Ribonucleoprotein</keyword>
<keyword id="KW-0689">Ribosomal protein</keyword>
<keyword id="KW-0694">RNA-binding</keyword>
<keyword id="KW-0699">rRNA-binding</keyword>
<gene>
    <name type="primary">RPS4B</name>
    <name type="ordered locus">At5g07090</name>
    <name type="ORF">MOJ9.26</name>
    <name type="ORF">T28J14_30</name>
</gene>
<sequence>MARGLKKHLKRLNAPKHWMLDKLGGAFAPKPSSGPHKSRECLPLVLIIRNRLKYALTYREVISILMQRHIQVDGKVRTDKTYPAGFMDVVSIPKTNENFRLLYDTKGRFRLHSIKDEEAKFKLCKVRSIQFGQKGIPYLNTYDGRTIRYPDPLIKPNDTIKLDLEENKIVEFIKFDVGNVVMVTGGRNRGRVGVIKNREKHKGSFETIHIQDSTGHEFATRLGNVYTIGKGTKPWVSLPKGKGIKLTIIEEARKRLASQQAA</sequence>
<accession>P49204</accession>
<accession>Q42346</accession>
<accession>Q9FL39</accession>
<accession>Q9LYQ6</accession>
<proteinExistence type="evidence at transcript level"/>
<dbReference type="EMBL" id="AB010697">
    <property type="protein sequence ID" value="BAB11167.1"/>
    <property type="status" value="ALT_SEQ"/>
    <property type="molecule type" value="Genomic_DNA"/>
</dbReference>
<dbReference type="EMBL" id="AL163652">
    <property type="protein sequence ID" value="CAB87265.1"/>
    <property type="molecule type" value="Genomic_DNA"/>
</dbReference>
<dbReference type="EMBL" id="CP002688">
    <property type="protein sequence ID" value="AED91107.1"/>
    <property type="molecule type" value="Genomic_DNA"/>
</dbReference>
<dbReference type="EMBL" id="AY050933">
    <property type="protein sequence ID" value="AAK93610.1"/>
    <property type="molecule type" value="mRNA"/>
</dbReference>
<dbReference type="EMBL" id="AY070769">
    <property type="protein sequence ID" value="AAL50106.1"/>
    <property type="molecule type" value="mRNA"/>
</dbReference>
<dbReference type="EMBL" id="AY079417">
    <property type="protein sequence ID" value="AAL85148.1"/>
    <property type="molecule type" value="mRNA"/>
</dbReference>
<dbReference type="EMBL" id="AY093715">
    <property type="protein sequence ID" value="AAM10339.1"/>
    <property type="molecule type" value="mRNA"/>
</dbReference>
<dbReference type="EMBL" id="AY085205">
    <property type="protein sequence ID" value="AAM61755.1"/>
    <property type="molecule type" value="mRNA"/>
</dbReference>
<dbReference type="EMBL" id="Z17994">
    <property type="protein sequence ID" value="CAA79086.1"/>
    <property type="status" value="ALT_INIT"/>
    <property type="molecule type" value="mRNA"/>
</dbReference>
<dbReference type="EMBL" id="Z18498">
    <property type="protein sequence ID" value="CAA79206.1"/>
    <property type="molecule type" value="mRNA"/>
</dbReference>
<dbReference type="EMBL" id="Z32619">
    <property type="protein sequence ID" value="CAA83563.1"/>
    <property type="molecule type" value="mRNA"/>
</dbReference>
<dbReference type="EMBL" id="Z32618">
    <property type="protein sequence ID" value="CAA83562.1"/>
    <property type="molecule type" value="mRNA"/>
</dbReference>
<dbReference type="EMBL" id="F20029">
    <property type="protein sequence ID" value="CAA23384.1"/>
    <property type="molecule type" value="mRNA"/>
</dbReference>
<dbReference type="PIR" id="T48480">
    <property type="entry name" value="T48480"/>
</dbReference>
<dbReference type="RefSeq" id="NP_568179.1">
    <molecule id="P49204-1"/>
    <property type="nucleotide sequence ID" value="NM_120791.4"/>
</dbReference>
<dbReference type="SMR" id="P49204"/>
<dbReference type="BioGRID" id="15879">
    <property type="interactions" value="166"/>
</dbReference>
<dbReference type="FunCoup" id="P49204">
    <property type="interactions" value="2831"/>
</dbReference>
<dbReference type="IntAct" id="P49204">
    <property type="interactions" value="1"/>
</dbReference>
<dbReference type="STRING" id="3702.P49204"/>
<dbReference type="iPTMnet" id="P49204"/>
<dbReference type="PaxDb" id="3702-AT5G07090.1"/>
<dbReference type="EnsemblPlants" id="AT5G07090.1">
    <molecule id="P49204-1"/>
    <property type="protein sequence ID" value="AT5G07090.1"/>
    <property type="gene ID" value="AT5G07090"/>
</dbReference>
<dbReference type="GeneID" id="830600"/>
<dbReference type="Gramene" id="AT5G07090.1">
    <molecule id="P49204-1"/>
    <property type="protein sequence ID" value="AT5G07090.1"/>
    <property type="gene ID" value="AT5G07090"/>
</dbReference>
<dbReference type="KEGG" id="ath:AT5G07090"/>
<dbReference type="Araport" id="AT5G07090"/>
<dbReference type="TAIR" id="AT5G07090"/>
<dbReference type="eggNOG" id="KOG0378">
    <property type="taxonomic scope" value="Eukaryota"/>
</dbReference>
<dbReference type="HOGENOM" id="CLU_060400_1_0_1"/>
<dbReference type="InParanoid" id="P49204"/>
<dbReference type="OMA" id="DIVHMKD"/>
<dbReference type="PhylomeDB" id="P49204"/>
<dbReference type="PRO" id="PR:P49204"/>
<dbReference type="Proteomes" id="UP000006548">
    <property type="component" value="Chromosome 5"/>
</dbReference>
<dbReference type="ExpressionAtlas" id="P49204">
    <property type="expression patterns" value="baseline and differential"/>
</dbReference>
<dbReference type="GO" id="GO:0022626">
    <property type="term" value="C:cytosolic ribosome"/>
    <property type="evidence" value="ECO:0007005"/>
    <property type="project" value="TAIR"/>
</dbReference>
<dbReference type="GO" id="GO:0000325">
    <property type="term" value="C:plant-type vacuole"/>
    <property type="evidence" value="ECO:0007005"/>
    <property type="project" value="TAIR"/>
</dbReference>
<dbReference type="GO" id="GO:0005886">
    <property type="term" value="C:plasma membrane"/>
    <property type="evidence" value="ECO:0007005"/>
    <property type="project" value="TAIR"/>
</dbReference>
<dbReference type="GO" id="GO:1990904">
    <property type="term" value="C:ribonucleoprotein complex"/>
    <property type="evidence" value="ECO:0007669"/>
    <property type="project" value="UniProtKB-KW"/>
</dbReference>
<dbReference type="GO" id="GO:0003729">
    <property type="term" value="F:mRNA binding"/>
    <property type="evidence" value="ECO:0000314"/>
    <property type="project" value="TAIR"/>
</dbReference>
<dbReference type="GO" id="GO:0019843">
    <property type="term" value="F:rRNA binding"/>
    <property type="evidence" value="ECO:0007669"/>
    <property type="project" value="UniProtKB-KW"/>
</dbReference>
<dbReference type="GO" id="GO:0003735">
    <property type="term" value="F:structural constituent of ribosome"/>
    <property type="evidence" value="ECO:0007669"/>
    <property type="project" value="InterPro"/>
</dbReference>
<dbReference type="GO" id="GO:0006412">
    <property type="term" value="P:translation"/>
    <property type="evidence" value="ECO:0007669"/>
    <property type="project" value="InterPro"/>
</dbReference>
<dbReference type="CDD" id="cd06087">
    <property type="entry name" value="KOW_RPS4"/>
    <property type="match status" value="1"/>
</dbReference>
<dbReference type="CDD" id="cd00165">
    <property type="entry name" value="S4"/>
    <property type="match status" value="1"/>
</dbReference>
<dbReference type="FunFam" id="2.30.30.30:FF:000005">
    <property type="entry name" value="40S ribosomal protein S4"/>
    <property type="match status" value="1"/>
</dbReference>
<dbReference type="FunFam" id="2.40.50.740:FF:000001">
    <property type="entry name" value="40S ribosomal protein S4"/>
    <property type="match status" value="1"/>
</dbReference>
<dbReference type="FunFam" id="3.10.290.10:FF:000002">
    <property type="entry name" value="40S ribosomal protein S4"/>
    <property type="match status" value="1"/>
</dbReference>
<dbReference type="Gene3D" id="2.30.30.30">
    <property type="match status" value="1"/>
</dbReference>
<dbReference type="Gene3D" id="2.40.50.740">
    <property type="match status" value="1"/>
</dbReference>
<dbReference type="Gene3D" id="3.10.290.10">
    <property type="entry name" value="RNA-binding S4 domain"/>
    <property type="match status" value="1"/>
</dbReference>
<dbReference type="HAMAP" id="MF_00485">
    <property type="entry name" value="Ribosomal_eS4"/>
    <property type="match status" value="1"/>
</dbReference>
<dbReference type="InterPro" id="IPR005824">
    <property type="entry name" value="KOW"/>
</dbReference>
<dbReference type="InterPro" id="IPR014722">
    <property type="entry name" value="Rib_uL2_dom2"/>
</dbReference>
<dbReference type="InterPro" id="IPR000876">
    <property type="entry name" value="Ribosomal_eS4"/>
</dbReference>
<dbReference type="InterPro" id="IPR032277">
    <property type="entry name" value="Ribosomal_eS4_C"/>
</dbReference>
<dbReference type="InterPro" id="IPR013845">
    <property type="entry name" value="Ribosomal_eS4_central_region"/>
</dbReference>
<dbReference type="InterPro" id="IPR038237">
    <property type="entry name" value="Ribosomal_eS4_central_sf"/>
</dbReference>
<dbReference type="InterPro" id="IPR041982">
    <property type="entry name" value="Ribosomal_eS4_KOW"/>
</dbReference>
<dbReference type="InterPro" id="IPR013843">
    <property type="entry name" value="Ribosomal_eS4_N"/>
</dbReference>
<dbReference type="InterPro" id="IPR018199">
    <property type="entry name" value="Ribosomal_eS4_N_CS"/>
</dbReference>
<dbReference type="InterPro" id="IPR036986">
    <property type="entry name" value="S4_RNA-bd_sf"/>
</dbReference>
<dbReference type="NCBIfam" id="NF003312">
    <property type="entry name" value="PRK04313.1"/>
    <property type="match status" value="1"/>
</dbReference>
<dbReference type="PANTHER" id="PTHR11581">
    <property type="entry name" value="30S/40S RIBOSOMAL PROTEIN S4"/>
    <property type="match status" value="1"/>
</dbReference>
<dbReference type="PANTHER" id="PTHR11581:SF0">
    <property type="entry name" value="SMALL RIBOSOMAL SUBUNIT PROTEIN ES4"/>
    <property type="match status" value="1"/>
</dbReference>
<dbReference type="Pfam" id="PF16121">
    <property type="entry name" value="40S_S4_C"/>
    <property type="match status" value="1"/>
</dbReference>
<dbReference type="Pfam" id="PF00467">
    <property type="entry name" value="KOW"/>
    <property type="match status" value="1"/>
</dbReference>
<dbReference type="Pfam" id="PF00900">
    <property type="entry name" value="Ribosomal_S4e"/>
    <property type="match status" value="1"/>
</dbReference>
<dbReference type="Pfam" id="PF08071">
    <property type="entry name" value="RS4NT"/>
    <property type="match status" value="1"/>
</dbReference>
<dbReference type="PIRSF" id="PIRSF002116">
    <property type="entry name" value="Ribosomal_S4"/>
    <property type="match status" value="1"/>
</dbReference>
<dbReference type="SMART" id="SM00739">
    <property type="entry name" value="KOW"/>
    <property type="match status" value="1"/>
</dbReference>
<dbReference type="PROSITE" id="PS00528">
    <property type="entry name" value="RIBOSOMAL_S4E"/>
    <property type="match status" value="1"/>
</dbReference>
<dbReference type="PROSITE" id="PS50889">
    <property type="entry name" value="S4"/>
    <property type="match status" value="1"/>
</dbReference>
<protein>
    <recommendedName>
        <fullName evidence="2">Small ribosomal subunit protein eS4y</fullName>
    </recommendedName>
    <alternativeName>
        <fullName>40S ribosomal protein S4-2</fullName>
    </alternativeName>
</protein>